<organism>
    <name type="scientific">Erwinia tasmaniensis (strain DSM 17950 / CFBP 7177 / CIP 109463 / NCPPB 4357 / Et1/99)</name>
    <dbReference type="NCBI Taxonomy" id="465817"/>
    <lineage>
        <taxon>Bacteria</taxon>
        <taxon>Pseudomonadati</taxon>
        <taxon>Pseudomonadota</taxon>
        <taxon>Gammaproteobacteria</taxon>
        <taxon>Enterobacterales</taxon>
        <taxon>Erwiniaceae</taxon>
        <taxon>Erwinia</taxon>
    </lineage>
</organism>
<dbReference type="EC" id="3.1.3.77" evidence="1"/>
<dbReference type="EMBL" id="CU468135">
    <property type="protein sequence ID" value="CAO97654.1"/>
    <property type="molecule type" value="Genomic_DNA"/>
</dbReference>
<dbReference type="RefSeq" id="WP_012442319.1">
    <property type="nucleotide sequence ID" value="NC_010694.1"/>
</dbReference>
<dbReference type="SMR" id="B2VIR2"/>
<dbReference type="STRING" id="465817.ETA_26080"/>
<dbReference type="KEGG" id="eta:ETA_26080"/>
<dbReference type="eggNOG" id="COG4229">
    <property type="taxonomic scope" value="Bacteria"/>
</dbReference>
<dbReference type="HOGENOM" id="CLU_023273_0_0_6"/>
<dbReference type="OrthoDB" id="9797416at2"/>
<dbReference type="UniPathway" id="UPA00904">
    <property type="reaction ID" value="UER00876"/>
</dbReference>
<dbReference type="UniPathway" id="UPA00904">
    <property type="reaction ID" value="UER00877"/>
</dbReference>
<dbReference type="Proteomes" id="UP000001726">
    <property type="component" value="Chromosome"/>
</dbReference>
<dbReference type="GO" id="GO:0043715">
    <property type="term" value="F:2,3-diketo-5-methylthiopentyl-1-phosphate enolase activity"/>
    <property type="evidence" value="ECO:0007669"/>
    <property type="project" value="UniProtKB-UniRule"/>
</dbReference>
<dbReference type="GO" id="GO:0043716">
    <property type="term" value="F:2-hydroxy-3-keto-5-methylthiopentenyl-1-phosphate phosphatase activity"/>
    <property type="evidence" value="ECO:0007669"/>
    <property type="project" value="UniProtKB-UniRule"/>
</dbReference>
<dbReference type="GO" id="GO:0043874">
    <property type="term" value="F:acireductone synthase activity"/>
    <property type="evidence" value="ECO:0007669"/>
    <property type="project" value="UniProtKB-EC"/>
</dbReference>
<dbReference type="GO" id="GO:0000287">
    <property type="term" value="F:magnesium ion binding"/>
    <property type="evidence" value="ECO:0007669"/>
    <property type="project" value="UniProtKB-UniRule"/>
</dbReference>
<dbReference type="GO" id="GO:0019509">
    <property type="term" value="P:L-methionine salvage from methylthioadenosine"/>
    <property type="evidence" value="ECO:0007669"/>
    <property type="project" value="UniProtKB-UniRule"/>
</dbReference>
<dbReference type="CDD" id="cd01629">
    <property type="entry name" value="HAD_EP"/>
    <property type="match status" value="1"/>
</dbReference>
<dbReference type="Gene3D" id="1.10.720.60">
    <property type="match status" value="1"/>
</dbReference>
<dbReference type="Gene3D" id="3.40.50.1000">
    <property type="entry name" value="HAD superfamily/HAD-like"/>
    <property type="match status" value="1"/>
</dbReference>
<dbReference type="HAMAP" id="MF_01681">
    <property type="entry name" value="Salvage_MtnC"/>
    <property type="match status" value="1"/>
</dbReference>
<dbReference type="InterPro" id="IPR023943">
    <property type="entry name" value="Enolase-ppase_E1"/>
</dbReference>
<dbReference type="InterPro" id="IPR036412">
    <property type="entry name" value="HAD-like_sf"/>
</dbReference>
<dbReference type="InterPro" id="IPR006439">
    <property type="entry name" value="HAD-SF_hydro_IA"/>
</dbReference>
<dbReference type="InterPro" id="IPR023214">
    <property type="entry name" value="HAD_sf"/>
</dbReference>
<dbReference type="NCBIfam" id="TIGR01691">
    <property type="entry name" value="enolase-ppase"/>
    <property type="match status" value="1"/>
</dbReference>
<dbReference type="NCBIfam" id="TIGR01549">
    <property type="entry name" value="HAD-SF-IA-v1"/>
    <property type="match status" value="1"/>
</dbReference>
<dbReference type="PANTHER" id="PTHR20371">
    <property type="entry name" value="ENOLASE-PHOSPHATASE E1"/>
    <property type="match status" value="1"/>
</dbReference>
<dbReference type="PANTHER" id="PTHR20371:SF1">
    <property type="entry name" value="ENOLASE-PHOSPHATASE E1"/>
    <property type="match status" value="1"/>
</dbReference>
<dbReference type="Pfam" id="PF00702">
    <property type="entry name" value="Hydrolase"/>
    <property type="match status" value="1"/>
</dbReference>
<dbReference type="PRINTS" id="PR00413">
    <property type="entry name" value="HADHALOGNASE"/>
</dbReference>
<dbReference type="SFLD" id="SFLDG01129">
    <property type="entry name" value="C1.5:_HAD__Beta-PGM__Phosphata"/>
    <property type="match status" value="1"/>
</dbReference>
<dbReference type="SFLD" id="SFLDF00044">
    <property type="entry name" value="enolase-phosphatase"/>
    <property type="match status" value="1"/>
</dbReference>
<dbReference type="SUPFAM" id="SSF56784">
    <property type="entry name" value="HAD-like"/>
    <property type="match status" value="1"/>
</dbReference>
<reference key="1">
    <citation type="journal article" date="2008" name="Environ. Microbiol.">
        <title>The genome of Erwinia tasmaniensis strain Et1/99, a non-pathogenic bacterium in the genus Erwinia.</title>
        <authorList>
            <person name="Kube M."/>
            <person name="Migdoll A.M."/>
            <person name="Mueller I."/>
            <person name="Kuhl H."/>
            <person name="Beck A."/>
            <person name="Reinhardt R."/>
            <person name="Geider K."/>
        </authorList>
    </citation>
    <scope>NUCLEOTIDE SEQUENCE [LARGE SCALE GENOMIC DNA]</scope>
    <source>
        <strain>DSM 17950 / CFBP 7177 / CIP 109463 / NCPPB 4357 / Et1/99</strain>
    </source>
</reference>
<feature type="chain" id="PRO_0000357365" description="Enolase-phosphatase E1">
    <location>
        <begin position="1"/>
        <end position="229"/>
    </location>
</feature>
<evidence type="ECO:0000255" key="1">
    <source>
        <dbReference type="HAMAP-Rule" id="MF_01681"/>
    </source>
</evidence>
<keyword id="KW-0028">Amino-acid biosynthesis</keyword>
<keyword id="KW-0378">Hydrolase</keyword>
<keyword id="KW-0460">Magnesium</keyword>
<keyword id="KW-0479">Metal-binding</keyword>
<keyword id="KW-0486">Methionine biosynthesis</keyword>
<keyword id="KW-1185">Reference proteome</keyword>
<protein>
    <recommendedName>
        <fullName evidence="1">Enolase-phosphatase E1</fullName>
        <ecNumber evidence="1">3.1.3.77</ecNumber>
    </recommendedName>
    <alternativeName>
        <fullName evidence="1">2,3-diketo-5-methylthio-1-phosphopentane phosphatase</fullName>
    </alternativeName>
</protein>
<comment type="function">
    <text evidence="1">Bifunctional enzyme that catalyzes the enolization of 2,3-diketo-5-methylthiopentyl-1-phosphate (DK-MTP-1-P) into the intermediate 2-hydroxy-3-keto-5-methylthiopentenyl-1-phosphate (HK-MTPenyl-1-P), which is then dephosphorylated to form the acireductone 1,2-dihydroxy-3-keto-5-methylthiopentene (DHK-MTPene).</text>
</comment>
<comment type="catalytic activity">
    <reaction evidence="1">
        <text>5-methylsulfanyl-2,3-dioxopentyl phosphate + H2O = 1,2-dihydroxy-5-(methylsulfanyl)pent-1-en-3-one + phosphate</text>
        <dbReference type="Rhea" id="RHEA:21700"/>
        <dbReference type="ChEBI" id="CHEBI:15377"/>
        <dbReference type="ChEBI" id="CHEBI:43474"/>
        <dbReference type="ChEBI" id="CHEBI:49252"/>
        <dbReference type="ChEBI" id="CHEBI:58828"/>
        <dbReference type="EC" id="3.1.3.77"/>
    </reaction>
</comment>
<comment type="cofactor">
    <cofactor evidence="1">
        <name>Mg(2+)</name>
        <dbReference type="ChEBI" id="CHEBI:18420"/>
    </cofactor>
    <text evidence="1">Binds 1 Mg(2+) ion per subunit.</text>
</comment>
<comment type="pathway">
    <text evidence="1">Amino-acid biosynthesis; L-methionine biosynthesis via salvage pathway; L-methionine from S-methyl-5-thio-alpha-D-ribose 1-phosphate: step 3/6.</text>
</comment>
<comment type="pathway">
    <text evidence="1">Amino-acid biosynthesis; L-methionine biosynthesis via salvage pathway; L-methionine from S-methyl-5-thio-alpha-D-ribose 1-phosphate: step 4/6.</text>
</comment>
<comment type="subunit">
    <text evidence="1">Monomer.</text>
</comment>
<comment type="similarity">
    <text evidence="1">Belongs to the HAD-like hydrolase superfamily. MasA/MtnC family.</text>
</comment>
<sequence>MIRAIVTDIEGTTSDIRFVHNVLFPYARENLPSFIIGNQQQPAVAQALDQLRAEVERPEATVQELIDVLFGFMDEDRKSTALKALQGMVWRDGYLNGSFTGHLYPDVLPALRRWQQQGLALYVYSSGSVAAQKLLFGYSDAGDITGLFSGYFDTHMGAKREVDAYRNIASQIGLPAEQLLFLSDIHEELDAARDAGWHTVQLIRGAADNASRHRQVTDFDRINQELLNS</sequence>
<gene>
    <name evidence="1" type="primary">mtnC</name>
    <name type="ordered locus">ETA_26080</name>
</gene>
<accession>B2VIR2</accession>
<proteinExistence type="inferred from homology"/>
<name>MTNC_ERWT9</name>